<evidence type="ECO:0000255" key="1">
    <source>
        <dbReference type="HAMAP-Rule" id="MF_00412"/>
    </source>
</evidence>
<comment type="function">
    <text evidence="1">Catalyzes the NADPH-dependent reduction of L-glutamate 5-phosphate into L-glutamate 5-semialdehyde and phosphate. The product spontaneously undergoes cyclization to form 1-pyrroline-5-carboxylate.</text>
</comment>
<comment type="catalytic activity">
    <reaction evidence="1">
        <text>L-glutamate 5-semialdehyde + phosphate + NADP(+) = L-glutamyl 5-phosphate + NADPH + H(+)</text>
        <dbReference type="Rhea" id="RHEA:19541"/>
        <dbReference type="ChEBI" id="CHEBI:15378"/>
        <dbReference type="ChEBI" id="CHEBI:43474"/>
        <dbReference type="ChEBI" id="CHEBI:57783"/>
        <dbReference type="ChEBI" id="CHEBI:58066"/>
        <dbReference type="ChEBI" id="CHEBI:58274"/>
        <dbReference type="ChEBI" id="CHEBI:58349"/>
        <dbReference type="EC" id="1.2.1.41"/>
    </reaction>
</comment>
<comment type="pathway">
    <text evidence="1">Amino-acid biosynthesis; L-proline biosynthesis; L-glutamate 5-semialdehyde from L-glutamate: step 2/2.</text>
</comment>
<comment type="subcellular location">
    <subcellularLocation>
        <location evidence="1">Cytoplasm</location>
    </subcellularLocation>
</comment>
<comment type="similarity">
    <text evidence="1">Belongs to the gamma-glutamyl phosphate reductase family.</text>
</comment>
<proteinExistence type="inferred from homology"/>
<feature type="chain" id="PRO_0000340873" description="Gamma-glutamyl phosphate reductase">
    <location>
        <begin position="1"/>
        <end position="427"/>
    </location>
</feature>
<organism>
    <name type="scientific">Bifidobacterium adolescentis (strain ATCC 15703 / DSM 20083 / NCTC 11814 / E194a)</name>
    <dbReference type="NCBI Taxonomy" id="367928"/>
    <lineage>
        <taxon>Bacteria</taxon>
        <taxon>Bacillati</taxon>
        <taxon>Actinomycetota</taxon>
        <taxon>Actinomycetes</taxon>
        <taxon>Bifidobacteriales</taxon>
        <taxon>Bifidobacteriaceae</taxon>
        <taxon>Bifidobacterium</taxon>
    </lineage>
</organism>
<sequence>MNADVFEAVCAMGDAARTAQSQLAQANTEAKNQLLNAIADALDQHADDIAAANTLDMNKAETDGMDAGKLDRLKFDQQRITAAAQGVRHVASLPDPIGEIVRGYHLENGLRLQQVRVPIGVLGMIYEARPNVTVDVASLCIKSGNAVLLRGGHAAEHTNAATLAVIADVLTKHGYDHNMIATVDQYGRDGATAMMEARGHIDVLIPRGGAGLIQAVVRNSKVPVIETGAGNVHIYVDRTGNPDKAIPILINAKTQRVGVCNATEKLLVHKDIAESFLPKAAAALAAAGVEMHADERAYGIIEHAGIANAQLVHATDEDWDTEYLALKIGIKVVDSLDEAIAHINRHSTGHTESIIAEDYSAIEEFTARIDSAVVMVNASTRFTDGGVFGFGAELGISTQKMHARGPMGLHEMTTTKWIGYGTGQVRE</sequence>
<protein>
    <recommendedName>
        <fullName evidence="1">Gamma-glutamyl phosphate reductase</fullName>
        <shortName evidence="1">GPR</shortName>
        <ecNumber evidence="1">1.2.1.41</ecNumber>
    </recommendedName>
    <alternativeName>
        <fullName evidence="1">Glutamate-5-semialdehyde dehydrogenase</fullName>
    </alternativeName>
    <alternativeName>
        <fullName evidence="1">Glutamyl-gamma-semialdehyde dehydrogenase</fullName>
        <shortName evidence="1">GSA dehydrogenase</shortName>
    </alternativeName>
</protein>
<name>PROA_BIFAA</name>
<dbReference type="EC" id="1.2.1.41" evidence="1"/>
<dbReference type="EMBL" id="AP009256">
    <property type="protein sequence ID" value="BAF39682.1"/>
    <property type="molecule type" value="Genomic_DNA"/>
</dbReference>
<dbReference type="SMR" id="A1A1U9"/>
<dbReference type="STRING" id="367928.BAD_0901"/>
<dbReference type="PaxDb" id="1680-BADO_0949"/>
<dbReference type="KEGG" id="bad:BAD_0901"/>
<dbReference type="HOGENOM" id="CLU_030231_0_0_11"/>
<dbReference type="UniPathway" id="UPA00098">
    <property type="reaction ID" value="UER00360"/>
</dbReference>
<dbReference type="Proteomes" id="UP000008702">
    <property type="component" value="Chromosome"/>
</dbReference>
<dbReference type="GO" id="GO:0005737">
    <property type="term" value="C:cytoplasm"/>
    <property type="evidence" value="ECO:0007669"/>
    <property type="project" value="UniProtKB-SubCell"/>
</dbReference>
<dbReference type="GO" id="GO:0004350">
    <property type="term" value="F:glutamate-5-semialdehyde dehydrogenase activity"/>
    <property type="evidence" value="ECO:0007669"/>
    <property type="project" value="UniProtKB-UniRule"/>
</dbReference>
<dbReference type="GO" id="GO:0050661">
    <property type="term" value="F:NADP binding"/>
    <property type="evidence" value="ECO:0007669"/>
    <property type="project" value="InterPro"/>
</dbReference>
<dbReference type="GO" id="GO:0055129">
    <property type="term" value="P:L-proline biosynthetic process"/>
    <property type="evidence" value="ECO:0007669"/>
    <property type="project" value="UniProtKB-UniRule"/>
</dbReference>
<dbReference type="CDD" id="cd07079">
    <property type="entry name" value="ALDH_F18-19_ProA-GPR"/>
    <property type="match status" value="1"/>
</dbReference>
<dbReference type="FunFam" id="3.40.309.10:FF:000006">
    <property type="entry name" value="Gamma-glutamyl phosphate reductase"/>
    <property type="match status" value="1"/>
</dbReference>
<dbReference type="Gene3D" id="3.40.605.10">
    <property type="entry name" value="Aldehyde Dehydrogenase, Chain A, domain 1"/>
    <property type="match status" value="1"/>
</dbReference>
<dbReference type="Gene3D" id="3.40.309.10">
    <property type="entry name" value="Aldehyde Dehydrogenase, Chain A, domain 2"/>
    <property type="match status" value="1"/>
</dbReference>
<dbReference type="HAMAP" id="MF_00412">
    <property type="entry name" value="ProA"/>
    <property type="match status" value="1"/>
</dbReference>
<dbReference type="InterPro" id="IPR016161">
    <property type="entry name" value="Ald_DH/histidinol_DH"/>
</dbReference>
<dbReference type="InterPro" id="IPR016163">
    <property type="entry name" value="Ald_DH_C"/>
</dbReference>
<dbReference type="InterPro" id="IPR016162">
    <property type="entry name" value="Ald_DH_N"/>
</dbReference>
<dbReference type="InterPro" id="IPR015590">
    <property type="entry name" value="Aldehyde_DH_dom"/>
</dbReference>
<dbReference type="InterPro" id="IPR020593">
    <property type="entry name" value="G-glutamylP_reductase_CS"/>
</dbReference>
<dbReference type="InterPro" id="IPR012134">
    <property type="entry name" value="Glu-5-SA_DH"/>
</dbReference>
<dbReference type="InterPro" id="IPR000965">
    <property type="entry name" value="GPR_dom"/>
</dbReference>
<dbReference type="NCBIfam" id="NF001221">
    <property type="entry name" value="PRK00197.1"/>
    <property type="match status" value="1"/>
</dbReference>
<dbReference type="NCBIfam" id="TIGR00407">
    <property type="entry name" value="proA"/>
    <property type="match status" value="1"/>
</dbReference>
<dbReference type="PANTHER" id="PTHR11063:SF8">
    <property type="entry name" value="DELTA-1-PYRROLINE-5-CARBOXYLATE SYNTHASE"/>
    <property type="match status" value="1"/>
</dbReference>
<dbReference type="PANTHER" id="PTHR11063">
    <property type="entry name" value="GLUTAMATE SEMIALDEHYDE DEHYDROGENASE"/>
    <property type="match status" value="1"/>
</dbReference>
<dbReference type="Pfam" id="PF00171">
    <property type="entry name" value="Aldedh"/>
    <property type="match status" value="2"/>
</dbReference>
<dbReference type="PIRSF" id="PIRSF000151">
    <property type="entry name" value="GPR"/>
    <property type="match status" value="1"/>
</dbReference>
<dbReference type="SUPFAM" id="SSF53720">
    <property type="entry name" value="ALDH-like"/>
    <property type="match status" value="1"/>
</dbReference>
<dbReference type="PROSITE" id="PS01223">
    <property type="entry name" value="PROA"/>
    <property type="match status" value="1"/>
</dbReference>
<accession>A1A1U9</accession>
<reference key="1">
    <citation type="submission" date="2006-12" db="EMBL/GenBank/DDBJ databases">
        <title>Bifidobacterium adolescentis complete genome sequence.</title>
        <authorList>
            <person name="Suzuki T."/>
            <person name="Tsuda Y."/>
            <person name="Kanou N."/>
            <person name="Inoue T."/>
            <person name="Kumazaki K."/>
            <person name="Nagano S."/>
            <person name="Hirai S."/>
            <person name="Tanaka K."/>
            <person name="Watanabe K."/>
        </authorList>
    </citation>
    <scope>NUCLEOTIDE SEQUENCE [LARGE SCALE GENOMIC DNA]</scope>
    <source>
        <strain>ATCC 15703 / DSM 20083 / NCTC 11814 / E194a</strain>
    </source>
</reference>
<gene>
    <name evidence="1" type="primary">proA</name>
    <name type="ordered locus">BAD_0901</name>
</gene>
<keyword id="KW-0028">Amino-acid biosynthesis</keyword>
<keyword id="KW-0963">Cytoplasm</keyword>
<keyword id="KW-0521">NADP</keyword>
<keyword id="KW-0560">Oxidoreductase</keyword>
<keyword id="KW-0641">Proline biosynthesis</keyword>
<keyword id="KW-1185">Reference proteome</keyword>